<keyword id="KW-0067">ATP-binding</keyword>
<keyword id="KW-0418">Kinase</keyword>
<keyword id="KW-0460">Magnesium</keyword>
<keyword id="KW-0479">Metal-binding</keyword>
<keyword id="KW-0547">Nucleotide-binding</keyword>
<keyword id="KW-0597">Phosphoprotein</keyword>
<keyword id="KW-0808">Transferase</keyword>
<organism>
    <name type="scientific">Neisseria meningitidis serogroup C (strain 053442)</name>
    <dbReference type="NCBI Taxonomy" id="374833"/>
    <lineage>
        <taxon>Bacteria</taxon>
        <taxon>Pseudomonadati</taxon>
        <taxon>Pseudomonadota</taxon>
        <taxon>Betaproteobacteria</taxon>
        <taxon>Neisseriales</taxon>
        <taxon>Neisseriaceae</taxon>
        <taxon>Neisseria</taxon>
    </lineage>
</organism>
<evidence type="ECO:0000255" key="1">
    <source>
        <dbReference type="HAMAP-Rule" id="MF_00347"/>
    </source>
</evidence>
<comment type="function">
    <text evidence="1">Catalyzes the reversible transfer of the terminal phosphate of ATP to form a long-chain polyphosphate (polyP).</text>
</comment>
<comment type="catalytic activity">
    <reaction evidence="1">
        <text>[phosphate](n) + ATP = [phosphate](n+1) + ADP</text>
        <dbReference type="Rhea" id="RHEA:19573"/>
        <dbReference type="Rhea" id="RHEA-COMP:9859"/>
        <dbReference type="Rhea" id="RHEA-COMP:14280"/>
        <dbReference type="ChEBI" id="CHEBI:16838"/>
        <dbReference type="ChEBI" id="CHEBI:30616"/>
        <dbReference type="ChEBI" id="CHEBI:456216"/>
        <dbReference type="EC" id="2.7.4.1"/>
    </reaction>
</comment>
<comment type="cofactor">
    <cofactor evidence="1">
        <name>Mg(2+)</name>
        <dbReference type="ChEBI" id="CHEBI:18420"/>
    </cofactor>
</comment>
<comment type="PTM">
    <text evidence="1">An intermediate of this reaction is the autophosphorylated ppk in which a phosphate is covalently linked to a histidine residue through a N-P bond.</text>
</comment>
<comment type="similarity">
    <text evidence="1">Belongs to the polyphosphate kinase 1 (PPK1) family.</text>
</comment>
<feature type="chain" id="PRO_1000079370" description="Polyphosphate kinase">
    <location>
        <begin position="1"/>
        <end position="685"/>
    </location>
</feature>
<feature type="active site" description="Phosphohistidine intermediate" evidence="1">
    <location>
        <position position="435"/>
    </location>
</feature>
<feature type="binding site" evidence="1">
    <location>
        <position position="45"/>
    </location>
    <ligand>
        <name>ATP</name>
        <dbReference type="ChEBI" id="CHEBI:30616"/>
    </ligand>
</feature>
<feature type="binding site" evidence="1">
    <location>
        <position position="375"/>
    </location>
    <ligand>
        <name>Mg(2+)</name>
        <dbReference type="ChEBI" id="CHEBI:18420"/>
    </ligand>
</feature>
<feature type="binding site" evidence="1">
    <location>
        <position position="405"/>
    </location>
    <ligand>
        <name>Mg(2+)</name>
        <dbReference type="ChEBI" id="CHEBI:18420"/>
    </ligand>
</feature>
<feature type="binding site" evidence="1">
    <location>
        <position position="468"/>
    </location>
    <ligand>
        <name>ATP</name>
        <dbReference type="ChEBI" id="CHEBI:30616"/>
    </ligand>
</feature>
<feature type="binding site" evidence="1">
    <location>
        <position position="564"/>
    </location>
    <ligand>
        <name>ATP</name>
        <dbReference type="ChEBI" id="CHEBI:30616"/>
    </ligand>
</feature>
<feature type="binding site" evidence="1">
    <location>
        <position position="592"/>
    </location>
    <ligand>
        <name>ATP</name>
        <dbReference type="ChEBI" id="CHEBI:30616"/>
    </ligand>
</feature>
<name>PPK1_NEIM0</name>
<dbReference type="EC" id="2.7.4.1" evidence="1"/>
<dbReference type="EMBL" id="CP000381">
    <property type="protein sequence ID" value="ABX72528.1"/>
    <property type="molecule type" value="Genomic_DNA"/>
</dbReference>
<dbReference type="RefSeq" id="WP_012221248.1">
    <property type="nucleotide sequence ID" value="NC_010120.1"/>
</dbReference>
<dbReference type="SMR" id="A9M159"/>
<dbReference type="KEGG" id="nmn:NMCC_0320"/>
<dbReference type="HOGENOM" id="CLU_009678_4_2_4"/>
<dbReference type="Proteomes" id="UP000001177">
    <property type="component" value="Chromosome"/>
</dbReference>
<dbReference type="GO" id="GO:0009358">
    <property type="term" value="C:polyphosphate kinase complex"/>
    <property type="evidence" value="ECO:0007669"/>
    <property type="project" value="InterPro"/>
</dbReference>
<dbReference type="GO" id="GO:0005524">
    <property type="term" value="F:ATP binding"/>
    <property type="evidence" value="ECO:0007669"/>
    <property type="project" value="UniProtKB-KW"/>
</dbReference>
<dbReference type="GO" id="GO:0046872">
    <property type="term" value="F:metal ion binding"/>
    <property type="evidence" value="ECO:0007669"/>
    <property type="project" value="UniProtKB-KW"/>
</dbReference>
<dbReference type="GO" id="GO:0008976">
    <property type="term" value="F:polyphosphate kinase activity"/>
    <property type="evidence" value="ECO:0007669"/>
    <property type="project" value="UniProtKB-UniRule"/>
</dbReference>
<dbReference type="GO" id="GO:0006799">
    <property type="term" value="P:polyphosphate biosynthetic process"/>
    <property type="evidence" value="ECO:0007669"/>
    <property type="project" value="UniProtKB-UniRule"/>
</dbReference>
<dbReference type="CDD" id="cd09165">
    <property type="entry name" value="PLDc_PaPPK1_C1_like"/>
    <property type="match status" value="1"/>
</dbReference>
<dbReference type="CDD" id="cd09168">
    <property type="entry name" value="PLDc_PaPPK1_C2_like"/>
    <property type="match status" value="1"/>
</dbReference>
<dbReference type="Gene3D" id="3.30.870.10">
    <property type="entry name" value="Endonuclease Chain A"/>
    <property type="match status" value="2"/>
</dbReference>
<dbReference type="Gene3D" id="3.30.1840.10">
    <property type="entry name" value="Polyphosphate kinase middle domain"/>
    <property type="match status" value="1"/>
</dbReference>
<dbReference type="Gene3D" id="1.20.58.310">
    <property type="entry name" value="Polyphosphate kinase N-terminal domain"/>
    <property type="match status" value="1"/>
</dbReference>
<dbReference type="HAMAP" id="MF_00347">
    <property type="entry name" value="Polyphosphate_kinase"/>
    <property type="match status" value="1"/>
</dbReference>
<dbReference type="InterPro" id="IPR003414">
    <property type="entry name" value="PP_kinase"/>
</dbReference>
<dbReference type="InterPro" id="IPR041108">
    <property type="entry name" value="PP_kinase_C_1"/>
</dbReference>
<dbReference type="InterPro" id="IPR024953">
    <property type="entry name" value="PP_kinase_middle"/>
</dbReference>
<dbReference type="InterPro" id="IPR036830">
    <property type="entry name" value="PP_kinase_middle_dom_sf"/>
</dbReference>
<dbReference type="InterPro" id="IPR025200">
    <property type="entry name" value="PPK_C_dom2"/>
</dbReference>
<dbReference type="InterPro" id="IPR025198">
    <property type="entry name" value="PPK_N_dom"/>
</dbReference>
<dbReference type="InterPro" id="IPR036832">
    <property type="entry name" value="PPK_N_dom_sf"/>
</dbReference>
<dbReference type="NCBIfam" id="TIGR03705">
    <property type="entry name" value="poly_P_kin"/>
    <property type="match status" value="1"/>
</dbReference>
<dbReference type="NCBIfam" id="NF003917">
    <property type="entry name" value="PRK05443.1-1"/>
    <property type="match status" value="1"/>
</dbReference>
<dbReference type="NCBIfam" id="NF003918">
    <property type="entry name" value="PRK05443.1-2"/>
    <property type="match status" value="1"/>
</dbReference>
<dbReference type="NCBIfam" id="NF003921">
    <property type="entry name" value="PRK05443.2-2"/>
    <property type="match status" value="1"/>
</dbReference>
<dbReference type="PANTHER" id="PTHR30218">
    <property type="entry name" value="POLYPHOSPHATE KINASE"/>
    <property type="match status" value="1"/>
</dbReference>
<dbReference type="PANTHER" id="PTHR30218:SF0">
    <property type="entry name" value="POLYPHOSPHATE KINASE"/>
    <property type="match status" value="1"/>
</dbReference>
<dbReference type="Pfam" id="PF02503">
    <property type="entry name" value="PP_kinase"/>
    <property type="match status" value="1"/>
</dbReference>
<dbReference type="Pfam" id="PF13090">
    <property type="entry name" value="PP_kinase_C"/>
    <property type="match status" value="1"/>
</dbReference>
<dbReference type="Pfam" id="PF17941">
    <property type="entry name" value="PP_kinase_C_1"/>
    <property type="match status" value="1"/>
</dbReference>
<dbReference type="Pfam" id="PF13089">
    <property type="entry name" value="PP_kinase_N"/>
    <property type="match status" value="1"/>
</dbReference>
<dbReference type="PIRSF" id="PIRSF015589">
    <property type="entry name" value="PP_kinase"/>
    <property type="match status" value="1"/>
</dbReference>
<dbReference type="SUPFAM" id="SSF56024">
    <property type="entry name" value="Phospholipase D/nuclease"/>
    <property type="match status" value="2"/>
</dbReference>
<dbReference type="SUPFAM" id="SSF143724">
    <property type="entry name" value="PHP14-like"/>
    <property type="match status" value="1"/>
</dbReference>
<dbReference type="SUPFAM" id="SSF140356">
    <property type="entry name" value="PPK N-terminal domain-like"/>
    <property type="match status" value="1"/>
</dbReference>
<accession>A9M159</accession>
<proteinExistence type="inferred from homology"/>
<reference key="1">
    <citation type="journal article" date="2008" name="Genomics">
        <title>Characterization of ST-4821 complex, a unique Neisseria meningitidis clone.</title>
        <authorList>
            <person name="Peng J."/>
            <person name="Yang L."/>
            <person name="Yang F."/>
            <person name="Yang J."/>
            <person name="Yan Y."/>
            <person name="Nie H."/>
            <person name="Zhang X."/>
            <person name="Xiong Z."/>
            <person name="Jiang Y."/>
            <person name="Cheng F."/>
            <person name="Xu X."/>
            <person name="Chen S."/>
            <person name="Sun L."/>
            <person name="Li W."/>
            <person name="Shen Y."/>
            <person name="Shao Z."/>
            <person name="Liang X."/>
            <person name="Xu J."/>
            <person name="Jin Q."/>
        </authorList>
    </citation>
    <scope>NUCLEOTIDE SEQUENCE [LARGE SCALE GENOMIC DNA]</scope>
    <source>
        <strain>053442</strain>
    </source>
</reference>
<sequence length="685" mass="77165">MPEQNRILCRELSLLAFNRRVLAQAEDQNVPLLERLCFLCIVSSNLDEFFEVRMAWLKRENKLHPRRRLDNGKMPSETIADVTEAARSLIRHQYDLFNNVLQPELAREGIHFYRRRNWTDTQKKWIEDYFDRELLPILTPIGLDPSHPFPRPLNKSLNFAVELDGTDAFGRPSGMAIVQAPRILPRVVPLPSELCGGGHGFVFLSSILHAHVGKLFPGMNVKGCHQFRLTRDSDLTVDEEDVQNLRAAIQNELHDREYGDGVRLEVADTCPAYIRDFLLAQFKLTAAELYQVKGPVNLVRLNAVPDLVDRPDLKFPPHTQGRLKALGKNGSIFKLIRRAPILLHHPYQSFNPVVEMMREAAADPAVLAVKMTIYRTGTRSELVRALMKAALAGKQVTVVVELMARFDEANNVNWAKQLEEAGAHVVYGVFGYKVHAKMALVIRREDGVLKRYAHLGTGNYHQGTSRIYTDFGLITADEQITADVNTLFMEITGLGKPGRLNKLYQSPFTLHKMVIDRIARETEHAKAGKPARITAKMNSLIEPTVIEALYRASAAGVQIDLIVRGMCTLRPGVKGLSENIRVRSIIGRQLEHARVYCFHNNGADDTFISSADWMGRNFFRRIETAAPITAPELKKRVIREGLEMALADNTHAWLMQPDGGYIRAAPAEGESEADLQNDLWTLLGG</sequence>
<gene>
    <name evidence="1" type="primary">ppk</name>
    <name type="ordered locus">NMCC_0320</name>
</gene>
<protein>
    <recommendedName>
        <fullName evidence="1">Polyphosphate kinase</fullName>
        <ecNumber evidence="1">2.7.4.1</ecNumber>
    </recommendedName>
    <alternativeName>
        <fullName evidence="1">ATP-polyphosphate phosphotransferase</fullName>
    </alternativeName>
    <alternativeName>
        <fullName evidence="1">Polyphosphoric acid kinase</fullName>
    </alternativeName>
</protein>